<dbReference type="EC" id="5.6.1.7" evidence="1"/>
<dbReference type="EMBL" id="AM263198">
    <property type="protein sequence ID" value="CAK21507.1"/>
    <property type="molecule type" value="Genomic_DNA"/>
</dbReference>
<dbReference type="RefSeq" id="WP_011702848.1">
    <property type="nucleotide sequence ID" value="NC_008555.1"/>
</dbReference>
<dbReference type="SMR" id="A0AKH5"/>
<dbReference type="STRING" id="386043.lwe2089"/>
<dbReference type="GeneID" id="61189988"/>
<dbReference type="KEGG" id="lwe:lwe2089"/>
<dbReference type="eggNOG" id="COG0459">
    <property type="taxonomic scope" value="Bacteria"/>
</dbReference>
<dbReference type="HOGENOM" id="CLU_016503_3_0_9"/>
<dbReference type="OrthoDB" id="9766614at2"/>
<dbReference type="Proteomes" id="UP000000779">
    <property type="component" value="Chromosome"/>
</dbReference>
<dbReference type="GO" id="GO:0005737">
    <property type="term" value="C:cytoplasm"/>
    <property type="evidence" value="ECO:0007669"/>
    <property type="project" value="UniProtKB-SubCell"/>
</dbReference>
<dbReference type="GO" id="GO:0005524">
    <property type="term" value="F:ATP binding"/>
    <property type="evidence" value="ECO:0007669"/>
    <property type="project" value="UniProtKB-UniRule"/>
</dbReference>
<dbReference type="GO" id="GO:0140662">
    <property type="term" value="F:ATP-dependent protein folding chaperone"/>
    <property type="evidence" value="ECO:0007669"/>
    <property type="project" value="InterPro"/>
</dbReference>
<dbReference type="GO" id="GO:0016853">
    <property type="term" value="F:isomerase activity"/>
    <property type="evidence" value="ECO:0007669"/>
    <property type="project" value="UniProtKB-KW"/>
</dbReference>
<dbReference type="GO" id="GO:0051082">
    <property type="term" value="F:unfolded protein binding"/>
    <property type="evidence" value="ECO:0007669"/>
    <property type="project" value="UniProtKB-UniRule"/>
</dbReference>
<dbReference type="GO" id="GO:0042026">
    <property type="term" value="P:protein refolding"/>
    <property type="evidence" value="ECO:0007669"/>
    <property type="project" value="UniProtKB-UniRule"/>
</dbReference>
<dbReference type="CDD" id="cd03344">
    <property type="entry name" value="GroEL"/>
    <property type="match status" value="1"/>
</dbReference>
<dbReference type="FunFam" id="1.10.560.10:FF:000001">
    <property type="entry name" value="60 kDa chaperonin"/>
    <property type="match status" value="1"/>
</dbReference>
<dbReference type="FunFam" id="3.50.7.10:FF:000001">
    <property type="entry name" value="60 kDa chaperonin"/>
    <property type="match status" value="1"/>
</dbReference>
<dbReference type="Gene3D" id="3.50.7.10">
    <property type="entry name" value="GroEL"/>
    <property type="match status" value="1"/>
</dbReference>
<dbReference type="Gene3D" id="1.10.560.10">
    <property type="entry name" value="GroEL-like equatorial domain"/>
    <property type="match status" value="1"/>
</dbReference>
<dbReference type="Gene3D" id="3.30.260.10">
    <property type="entry name" value="TCP-1-like chaperonin intermediate domain"/>
    <property type="match status" value="1"/>
</dbReference>
<dbReference type="HAMAP" id="MF_00600">
    <property type="entry name" value="CH60"/>
    <property type="match status" value="1"/>
</dbReference>
<dbReference type="InterPro" id="IPR018370">
    <property type="entry name" value="Chaperonin_Cpn60_CS"/>
</dbReference>
<dbReference type="InterPro" id="IPR001844">
    <property type="entry name" value="Cpn60/GroEL"/>
</dbReference>
<dbReference type="InterPro" id="IPR002423">
    <property type="entry name" value="Cpn60/GroEL/TCP-1"/>
</dbReference>
<dbReference type="InterPro" id="IPR027409">
    <property type="entry name" value="GroEL-like_apical_dom_sf"/>
</dbReference>
<dbReference type="InterPro" id="IPR027413">
    <property type="entry name" value="GROEL-like_equatorial_sf"/>
</dbReference>
<dbReference type="InterPro" id="IPR027410">
    <property type="entry name" value="TCP-1-like_intermed_sf"/>
</dbReference>
<dbReference type="NCBIfam" id="TIGR02348">
    <property type="entry name" value="GroEL"/>
    <property type="match status" value="1"/>
</dbReference>
<dbReference type="NCBIfam" id="NF000592">
    <property type="entry name" value="PRK00013.1"/>
    <property type="match status" value="1"/>
</dbReference>
<dbReference type="NCBIfam" id="NF009487">
    <property type="entry name" value="PRK12849.1"/>
    <property type="match status" value="1"/>
</dbReference>
<dbReference type="NCBIfam" id="NF009488">
    <property type="entry name" value="PRK12850.1"/>
    <property type="match status" value="1"/>
</dbReference>
<dbReference type="NCBIfam" id="NF009489">
    <property type="entry name" value="PRK12851.1"/>
    <property type="match status" value="1"/>
</dbReference>
<dbReference type="PANTHER" id="PTHR45633">
    <property type="entry name" value="60 KDA HEAT SHOCK PROTEIN, MITOCHONDRIAL"/>
    <property type="match status" value="1"/>
</dbReference>
<dbReference type="Pfam" id="PF00118">
    <property type="entry name" value="Cpn60_TCP1"/>
    <property type="match status" value="1"/>
</dbReference>
<dbReference type="PRINTS" id="PR00298">
    <property type="entry name" value="CHAPERONIN60"/>
</dbReference>
<dbReference type="SUPFAM" id="SSF52029">
    <property type="entry name" value="GroEL apical domain-like"/>
    <property type="match status" value="1"/>
</dbReference>
<dbReference type="SUPFAM" id="SSF48592">
    <property type="entry name" value="GroEL equatorial domain-like"/>
    <property type="match status" value="1"/>
</dbReference>
<dbReference type="SUPFAM" id="SSF54849">
    <property type="entry name" value="GroEL-intermediate domain like"/>
    <property type="match status" value="1"/>
</dbReference>
<dbReference type="PROSITE" id="PS00296">
    <property type="entry name" value="CHAPERONINS_CPN60"/>
    <property type="match status" value="1"/>
</dbReference>
<evidence type="ECO:0000255" key="1">
    <source>
        <dbReference type="HAMAP-Rule" id="MF_00600"/>
    </source>
</evidence>
<gene>
    <name evidence="1" type="primary">groEL</name>
    <name evidence="1" type="synonym">groL</name>
    <name type="ordered locus">lwe2089</name>
</gene>
<organism>
    <name type="scientific">Listeria welshimeri serovar 6b (strain ATCC 35897 / DSM 20650 / CCUG 15529 / CIP 8149 / NCTC 11857 / SLCC 5334 / V8)</name>
    <dbReference type="NCBI Taxonomy" id="386043"/>
    <lineage>
        <taxon>Bacteria</taxon>
        <taxon>Bacillati</taxon>
        <taxon>Bacillota</taxon>
        <taxon>Bacilli</taxon>
        <taxon>Bacillales</taxon>
        <taxon>Listeriaceae</taxon>
        <taxon>Listeria</taxon>
    </lineage>
</organism>
<keyword id="KW-0067">ATP-binding</keyword>
<keyword id="KW-0143">Chaperone</keyword>
<keyword id="KW-0963">Cytoplasm</keyword>
<keyword id="KW-0413">Isomerase</keyword>
<keyword id="KW-0547">Nucleotide-binding</keyword>
<name>CH60_LISW6</name>
<feature type="chain" id="PRO_1000025805" description="Chaperonin GroEL">
    <location>
        <begin position="1"/>
        <end position="542"/>
    </location>
</feature>
<feature type="binding site" evidence="1">
    <location>
        <begin position="29"/>
        <end position="32"/>
    </location>
    <ligand>
        <name>ATP</name>
        <dbReference type="ChEBI" id="CHEBI:30616"/>
    </ligand>
</feature>
<feature type="binding site" evidence="1">
    <location>
        <begin position="86"/>
        <end position="90"/>
    </location>
    <ligand>
        <name>ATP</name>
        <dbReference type="ChEBI" id="CHEBI:30616"/>
    </ligand>
</feature>
<feature type="binding site" evidence="1">
    <location>
        <position position="413"/>
    </location>
    <ligand>
        <name>ATP</name>
        <dbReference type="ChEBI" id="CHEBI:30616"/>
    </ligand>
</feature>
<feature type="binding site" evidence="1">
    <location>
        <begin position="476"/>
        <end position="478"/>
    </location>
    <ligand>
        <name>ATP</name>
        <dbReference type="ChEBI" id="CHEBI:30616"/>
    </ligand>
</feature>
<feature type="binding site" evidence="1">
    <location>
        <position position="492"/>
    </location>
    <ligand>
        <name>ATP</name>
        <dbReference type="ChEBI" id="CHEBI:30616"/>
    </ligand>
</feature>
<sequence>MAKDIKFSEDARRAMLRGVDQLANAVKVTLGPKGRNVVLEKKFGSPLITNDGVTIAKEIELEDPFENMGAKLVSEVASKTNDVAGDGTTTATVLAQAMIQEGLKNVTAGANPVGVRRGIEKAVATAIEELKAISKPIESKESIAQVAAISSGDEEVGKLIAEAMERVGNDGVITIEESKGFATELDVVEGMQFDRGYTSPYMVTDSDKMEAVLEKPYILITDKKINNIQEILPVLEQVVQQGRPMLIIAEDVEGEAQATLVLNKLRGTFNVVAVKAPGFGDRRKAMLEDIAILTGGQVITEDLGLELKTATVDQLGTANKVVVTKDDTTIVEGAGDSTQISARVNQIRAQMEETTSEFDREKLQERLAKLAGGVAVVKVGAATETELKERKLRIEDALNSTRAAVEEGIVAGGGTALVSIYNKVAALEAEGDVETGINIVLRSLEEPVRQIAHNAGLEGSVIVERLKHEAVGVGFNAANGEWVNMIDAGIVDPTKVTRSALQNASSVAALLLTTEAVVADQPDENGPAAVPDMGMGGMGGMM</sequence>
<comment type="function">
    <text evidence="1">Together with its co-chaperonin GroES, plays an essential role in assisting protein folding. The GroEL-GroES system forms a nano-cage that allows encapsulation of the non-native substrate proteins and provides a physical environment optimized to promote and accelerate protein folding.</text>
</comment>
<comment type="catalytic activity">
    <reaction evidence="1">
        <text>ATP + H2O + a folded polypeptide = ADP + phosphate + an unfolded polypeptide.</text>
        <dbReference type="EC" id="5.6.1.7"/>
    </reaction>
</comment>
<comment type="subunit">
    <text evidence="1">Forms a cylinder of 14 subunits composed of two heptameric rings stacked back-to-back. Interacts with the co-chaperonin GroES.</text>
</comment>
<comment type="subcellular location">
    <subcellularLocation>
        <location evidence="1">Cytoplasm</location>
    </subcellularLocation>
</comment>
<comment type="similarity">
    <text evidence="1">Belongs to the chaperonin (HSP60) family.</text>
</comment>
<reference key="1">
    <citation type="journal article" date="2006" name="J. Bacteriol.">
        <title>Whole-genome sequence of Listeria welshimeri reveals common steps in genome reduction with Listeria innocua as compared to Listeria monocytogenes.</title>
        <authorList>
            <person name="Hain T."/>
            <person name="Steinweg C."/>
            <person name="Kuenne C.T."/>
            <person name="Billion A."/>
            <person name="Ghai R."/>
            <person name="Chatterjee S.S."/>
            <person name="Domann E."/>
            <person name="Kaerst U."/>
            <person name="Goesmann A."/>
            <person name="Bekel T."/>
            <person name="Bartels D."/>
            <person name="Kaiser O."/>
            <person name="Meyer F."/>
            <person name="Puehler A."/>
            <person name="Weisshaar B."/>
            <person name="Wehland J."/>
            <person name="Liang C."/>
            <person name="Dandekar T."/>
            <person name="Lampidis R."/>
            <person name="Kreft J."/>
            <person name="Goebel W."/>
            <person name="Chakraborty T."/>
        </authorList>
    </citation>
    <scope>NUCLEOTIDE SEQUENCE [LARGE SCALE GENOMIC DNA]</scope>
    <source>
        <strain>ATCC 35897 / DSM 20650 / CCUG 15529 / CIP 8149 / NCTC 11857 / SLCC 5334 / V8</strain>
    </source>
</reference>
<protein>
    <recommendedName>
        <fullName evidence="1">Chaperonin GroEL</fullName>
        <ecNumber evidence="1">5.6.1.7</ecNumber>
    </recommendedName>
    <alternativeName>
        <fullName evidence="1">60 kDa chaperonin</fullName>
    </alternativeName>
    <alternativeName>
        <fullName evidence="1">Chaperonin-60</fullName>
        <shortName evidence="1">Cpn60</shortName>
    </alternativeName>
</protein>
<proteinExistence type="inferred from homology"/>
<accession>A0AKH5</accession>